<dbReference type="EMBL" id="Y11741">
    <property type="protein sequence ID" value="CAA72417.1"/>
    <property type="molecule type" value="Genomic_DNA"/>
</dbReference>
<dbReference type="EMBL" id="Y11742">
    <property type="protein sequence ID" value="CAA72417.1"/>
    <property type="status" value="JOINED"/>
    <property type="molecule type" value="Genomic_DNA"/>
</dbReference>
<dbReference type="EMBL" id="Y11743">
    <property type="protein sequence ID" value="CAA72417.1"/>
    <property type="status" value="JOINED"/>
    <property type="molecule type" value="Genomic_DNA"/>
</dbReference>
<dbReference type="EMBL" id="Y11744">
    <property type="protein sequence ID" value="CAA72417.1"/>
    <property type="status" value="JOINED"/>
    <property type="molecule type" value="Genomic_DNA"/>
</dbReference>
<dbReference type="EMBL" id="Y11745">
    <property type="protein sequence ID" value="CAA72417.1"/>
    <property type="status" value="JOINED"/>
    <property type="molecule type" value="Genomic_DNA"/>
</dbReference>
<dbReference type="EMBL" id="Y11746">
    <property type="protein sequence ID" value="CAA72417.1"/>
    <property type="status" value="JOINED"/>
    <property type="molecule type" value="Genomic_DNA"/>
</dbReference>
<dbReference type="EMBL" id="Y11739">
    <property type="protein sequence ID" value="CAA72416.1"/>
    <property type="molecule type" value="mRNA"/>
</dbReference>
<dbReference type="EMBL" id="AK313878">
    <property type="protein sequence ID" value="BAG36604.1"/>
    <property type="molecule type" value="mRNA"/>
</dbReference>
<dbReference type="EMBL" id="CH471159">
    <property type="protein sequence ID" value="EAW51092.1"/>
    <property type="molecule type" value="Genomic_DNA"/>
</dbReference>
<dbReference type="CCDS" id="CCDS11232.1"/>
<dbReference type="RefSeq" id="NP_001356298.1">
    <property type="nucleotide sequence ID" value="NM_001369369.1"/>
</dbReference>
<dbReference type="RefSeq" id="NP_003584.2">
    <property type="nucleotide sequence ID" value="NM_003593.2"/>
</dbReference>
<dbReference type="RefSeq" id="XP_005258103.1">
    <property type="nucleotide sequence ID" value="XM_005258046.3"/>
</dbReference>
<dbReference type="PDB" id="5OCN">
    <property type="method" value="X-ray"/>
    <property type="resolution" value="2.70 A"/>
    <property type="chains" value="A/B/C/D/E/F/G/H=270-366"/>
</dbReference>
<dbReference type="PDB" id="6EL8">
    <property type="method" value="X-ray"/>
    <property type="resolution" value="1.61 A"/>
    <property type="chains" value="A/D=270-366"/>
</dbReference>
<dbReference type="PDBsum" id="5OCN"/>
<dbReference type="PDBsum" id="6EL8"/>
<dbReference type="SMR" id="O15353"/>
<dbReference type="BioGRID" id="114034">
    <property type="interactions" value="40"/>
</dbReference>
<dbReference type="FunCoup" id="O15353">
    <property type="interactions" value="72"/>
</dbReference>
<dbReference type="IntAct" id="O15353">
    <property type="interactions" value="37"/>
</dbReference>
<dbReference type="MINT" id="O15353"/>
<dbReference type="STRING" id="9606.ENSP00000226247"/>
<dbReference type="iPTMnet" id="O15353"/>
<dbReference type="PhosphoSitePlus" id="O15353"/>
<dbReference type="BioMuta" id="FOXN1"/>
<dbReference type="jPOST" id="O15353"/>
<dbReference type="MassIVE" id="O15353"/>
<dbReference type="PaxDb" id="9606-ENSP00000226247"/>
<dbReference type="PeptideAtlas" id="O15353"/>
<dbReference type="ProteomicsDB" id="48606"/>
<dbReference type="Antibodypedia" id="14085">
    <property type="antibodies" value="262 antibodies from 35 providers"/>
</dbReference>
<dbReference type="DNASU" id="8456"/>
<dbReference type="Ensembl" id="ENST00000226247.2">
    <property type="protein sequence ID" value="ENSP00000226247.2"/>
    <property type="gene ID" value="ENSG00000109101.8"/>
</dbReference>
<dbReference type="Ensembl" id="ENST00000577936.2">
    <property type="protein sequence ID" value="ENSP00000462159.2"/>
    <property type="gene ID" value="ENSG00000109101.8"/>
</dbReference>
<dbReference type="Ensembl" id="ENST00000579795.6">
    <property type="protein sequence ID" value="ENSP00000464645.1"/>
    <property type="gene ID" value="ENSG00000109101.8"/>
</dbReference>
<dbReference type="GeneID" id="8456"/>
<dbReference type="KEGG" id="hsa:8456"/>
<dbReference type="MANE-Select" id="ENST00000579795.6">
    <property type="protein sequence ID" value="ENSP00000464645.1"/>
    <property type="RefSeq nucleotide sequence ID" value="NM_001369369.1"/>
    <property type="RefSeq protein sequence ID" value="NP_001356298.1"/>
</dbReference>
<dbReference type="UCSC" id="uc002hbj.4">
    <property type="organism name" value="human"/>
</dbReference>
<dbReference type="AGR" id="HGNC:12765"/>
<dbReference type="CTD" id="8456"/>
<dbReference type="DisGeNET" id="8456"/>
<dbReference type="GeneCards" id="FOXN1"/>
<dbReference type="HGNC" id="HGNC:12765">
    <property type="gene designation" value="FOXN1"/>
</dbReference>
<dbReference type="HPA" id="ENSG00000109101">
    <property type="expression patterns" value="Tissue enhanced (esophagus, skin, vagina)"/>
</dbReference>
<dbReference type="MalaCards" id="FOXN1"/>
<dbReference type="MIM" id="242700">
    <property type="type" value="phenotype"/>
</dbReference>
<dbReference type="MIM" id="600838">
    <property type="type" value="gene"/>
</dbReference>
<dbReference type="MIM" id="601705">
    <property type="type" value="phenotype"/>
</dbReference>
<dbReference type="MIM" id="618806">
    <property type="type" value="phenotype"/>
</dbReference>
<dbReference type="neXtProt" id="NX_O15353"/>
<dbReference type="OpenTargets" id="ENSG00000109101"/>
<dbReference type="Orphanet" id="676039">
    <property type="disease" value="Combined immunodeficiency due to FOXN1 haploinsufficiency"/>
</dbReference>
<dbReference type="Orphanet" id="169095">
    <property type="disease" value="Severe combined immunodeficiency due to FOXN1 deficiency"/>
</dbReference>
<dbReference type="Orphanet" id="83471">
    <property type="disease" value="T-cell immunodeficiency with thymic aplasia"/>
</dbReference>
<dbReference type="PharmGKB" id="PA37368"/>
<dbReference type="VEuPathDB" id="HostDB:ENSG00000109101"/>
<dbReference type="eggNOG" id="KOG2294">
    <property type="taxonomic scope" value="Eukaryota"/>
</dbReference>
<dbReference type="GeneTree" id="ENSGT00940000158029"/>
<dbReference type="HOGENOM" id="CLU_031768_1_0_1"/>
<dbReference type="InParanoid" id="O15353"/>
<dbReference type="OMA" id="PSCGMKM"/>
<dbReference type="OrthoDB" id="10070006at2759"/>
<dbReference type="PAN-GO" id="O15353">
    <property type="GO annotations" value="3 GO annotations based on evolutionary models"/>
</dbReference>
<dbReference type="PhylomeDB" id="O15353"/>
<dbReference type="TreeFam" id="TF329867"/>
<dbReference type="PathwayCommons" id="O15353"/>
<dbReference type="SignaLink" id="O15353"/>
<dbReference type="SIGNOR" id="O15353"/>
<dbReference type="BioGRID-ORCS" id="8456">
    <property type="hits" value="15 hits in 1169 CRISPR screens"/>
</dbReference>
<dbReference type="ChiTaRS" id="FOXN1">
    <property type="organism name" value="human"/>
</dbReference>
<dbReference type="GeneWiki" id="FOXN1"/>
<dbReference type="GenomeRNAi" id="8456"/>
<dbReference type="Pharos" id="O15353">
    <property type="development level" value="Tbio"/>
</dbReference>
<dbReference type="PRO" id="PR:O15353"/>
<dbReference type="Proteomes" id="UP000005640">
    <property type="component" value="Chromosome 17"/>
</dbReference>
<dbReference type="RNAct" id="O15353">
    <property type="molecule type" value="protein"/>
</dbReference>
<dbReference type="Bgee" id="ENSG00000109101">
    <property type="expression patterns" value="Expressed in gingival epithelium and 58 other cell types or tissues"/>
</dbReference>
<dbReference type="ExpressionAtlas" id="O15353">
    <property type="expression patterns" value="baseline and differential"/>
</dbReference>
<dbReference type="GO" id="GO:0000785">
    <property type="term" value="C:chromatin"/>
    <property type="evidence" value="ECO:0000247"/>
    <property type="project" value="NTNU_SB"/>
</dbReference>
<dbReference type="GO" id="GO:0005634">
    <property type="term" value="C:nucleus"/>
    <property type="evidence" value="ECO:0000304"/>
    <property type="project" value="ProtInc"/>
</dbReference>
<dbReference type="GO" id="GO:0001228">
    <property type="term" value="F:DNA-binding transcription activator activity, RNA polymerase II-specific"/>
    <property type="evidence" value="ECO:0007669"/>
    <property type="project" value="Ensembl"/>
</dbReference>
<dbReference type="GO" id="GO:0000981">
    <property type="term" value="F:DNA-binding transcription factor activity, RNA polymerase II-specific"/>
    <property type="evidence" value="ECO:0000247"/>
    <property type="project" value="NTNU_SB"/>
</dbReference>
<dbReference type="GO" id="GO:0000976">
    <property type="term" value="F:transcription cis-regulatory region binding"/>
    <property type="evidence" value="ECO:0000318"/>
    <property type="project" value="GO_Central"/>
</dbReference>
<dbReference type="GO" id="GO:0009887">
    <property type="term" value="P:animal organ morphogenesis"/>
    <property type="evidence" value="ECO:0000304"/>
    <property type="project" value="ProtInc"/>
</dbReference>
<dbReference type="GO" id="GO:0048514">
    <property type="term" value="P:blood vessel morphogenesis"/>
    <property type="evidence" value="ECO:0007669"/>
    <property type="project" value="Ensembl"/>
</dbReference>
<dbReference type="GO" id="GO:0006952">
    <property type="term" value="P:defense response"/>
    <property type="evidence" value="ECO:0000304"/>
    <property type="project" value="ProtInc"/>
</dbReference>
<dbReference type="GO" id="GO:0008544">
    <property type="term" value="P:epidermis development"/>
    <property type="evidence" value="ECO:0000304"/>
    <property type="project" value="ProtInc"/>
</dbReference>
<dbReference type="GO" id="GO:0001942">
    <property type="term" value="P:hair follicle development"/>
    <property type="evidence" value="ECO:0007669"/>
    <property type="project" value="Ensembl"/>
</dbReference>
<dbReference type="GO" id="GO:0030216">
    <property type="term" value="P:keratinocyte differentiation"/>
    <property type="evidence" value="ECO:0007669"/>
    <property type="project" value="Ensembl"/>
</dbReference>
<dbReference type="GO" id="GO:0097535">
    <property type="term" value="P:lymphoid lineage cell migration into thymus"/>
    <property type="evidence" value="ECO:0007669"/>
    <property type="project" value="Ensembl"/>
</dbReference>
<dbReference type="GO" id="GO:0035878">
    <property type="term" value="P:nail development"/>
    <property type="evidence" value="ECO:0007669"/>
    <property type="project" value="Ensembl"/>
</dbReference>
<dbReference type="GO" id="GO:0030858">
    <property type="term" value="P:positive regulation of epithelial cell differentiation"/>
    <property type="evidence" value="ECO:0000314"/>
    <property type="project" value="BHF-UCL"/>
</dbReference>
<dbReference type="GO" id="GO:0051798">
    <property type="term" value="P:positive regulation of hair follicle development"/>
    <property type="evidence" value="ECO:0007669"/>
    <property type="project" value="Ensembl"/>
</dbReference>
<dbReference type="GO" id="GO:1902232">
    <property type="term" value="P:regulation of positive thymic T cell selection"/>
    <property type="evidence" value="ECO:0007669"/>
    <property type="project" value="Ensembl"/>
</dbReference>
<dbReference type="GO" id="GO:0006357">
    <property type="term" value="P:regulation of transcription by RNA polymerase II"/>
    <property type="evidence" value="ECO:0000318"/>
    <property type="project" value="GO_Central"/>
</dbReference>
<dbReference type="GO" id="GO:0043029">
    <property type="term" value="P:T cell homeostasis"/>
    <property type="evidence" value="ECO:0007669"/>
    <property type="project" value="Ensembl"/>
</dbReference>
<dbReference type="GO" id="GO:0002360">
    <property type="term" value="P:T cell lineage commitment"/>
    <property type="evidence" value="ECO:0007669"/>
    <property type="project" value="Ensembl"/>
</dbReference>
<dbReference type="GO" id="GO:0097536">
    <property type="term" value="P:thymus epithelium morphogenesis"/>
    <property type="evidence" value="ECO:0007669"/>
    <property type="project" value="Ensembl"/>
</dbReference>
<dbReference type="CDD" id="cd20056">
    <property type="entry name" value="FH_FOXN1"/>
    <property type="match status" value="1"/>
</dbReference>
<dbReference type="FunFam" id="1.10.10.10:FF:000122">
    <property type="entry name" value="Forkhead box protein N1"/>
    <property type="match status" value="1"/>
</dbReference>
<dbReference type="Gene3D" id="1.10.10.10">
    <property type="entry name" value="Winged helix-like DNA-binding domain superfamily/Winged helix DNA-binding domain"/>
    <property type="match status" value="1"/>
</dbReference>
<dbReference type="InterPro" id="IPR047401">
    <property type="entry name" value="FH_FOXN1"/>
</dbReference>
<dbReference type="InterPro" id="IPR001766">
    <property type="entry name" value="Fork_head_dom"/>
</dbReference>
<dbReference type="InterPro" id="IPR049624">
    <property type="entry name" value="FOXN1_4"/>
</dbReference>
<dbReference type="InterPro" id="IPR030456">
    <property type="entry name" value="TF_fork_head_CS_2"/>
</dbReference>
<dbReference type="InterPro" id="IPR036388">
    <property type="entry name" value="WH-like_DNA-bd_sf"/>
</dbReference>
<dbReference type="InterPro" id="IPR036390">
    <property type="entry name" value="WH_DNA-bd_sf"/>
</dbReference>
<dbReference type="PANTHER" id="PTHR46721">
    <property type="entry name" value="FORKHEAD BOX PROTEIN N1"/>
    <property type="match status" value="1"/>
</dbReference>
<dbReference type="PANTHER" id="PTHR46721:SF1">
    <property type="entry name" value="FORKHEAD BOX PROTEIN N1"/>
    <property type="match status" value="1"/>
</dbReference>
<dbReference type="Pfam" id="PF00250">
    <property type="entry name" value="Forkhead"/>
    <property type="match status" value="1"/>
</dbReference>
<dbReference type="PRINTS" id="PR00053">
    <property type="entry name" value="FORKHEAD"/>
</dbReference>
<dbReference type="SMART" id="SM00339">
    <property type="entry name" value="FH"/>
    <property type="match status" value="1"/>
</dbReference>
<dbReference type="SUPFAM" id="SSF46785">
    <property type="entry name" value="Winged helix' DNA-binding domain"/>
    <property type="match status" value="1"/>
</dbReference>
<dbReference type="PROSITE" id="PS00658">
    <property type="entry name" value="FORK_HEAD_2"/>
    <property type="match status" value="1"/>
</dbReference>
<dbReference type="PROSITE" id="PS50039">
    <property type="entry name" value="FORK_HEAD_3"/>
    <property type="match status" value="1"/>
</dbReference>
<comment type="function">
    <text evidence="1 6">Transcriptional regulator which regulates the development, differentiation, and function of thymic epithelial cells (TECs) both in the prenatal and postnatal thymus. Acts as a master regulator of the TECs lineage development and is required from the onset of differentiation in progenitor TECs in the developing fetus to the final differentiation steps through which TECs mature to acquire their full functionality. Regulates, either directly or indirectly the expression of a variety of genes that mediate diverse aspects of thymus development and function, including MHC Class II, DLL4, CCL25, CTSL, CD40 and PAX1. Regulates the differentiation of the immature TECs into functional cortical TECs (cTECs) and medullary TECs (mTECs). Essential for maintenance of mTECs population in the postnatal thymus. Involved in the morphogenesis and maintenance of the three-dimensional thymic microstructure which is necessary for a fully functional thymus. Plays an important role in the maintenance of hematopoiesis and particularly T lineage progenitors within the bone marrow niche with age. Essential for the vascularization of the thymus anlage. Promotes the terminal differentiation of epithelial cells in the epidermis and hair follicles, partly by negatively regulating the activity of protein kinase C (By similarity). Plays a crucial role in the early prenatal stages of T-cell ontogeny (PubMed:21507891).</text>
</comment>
<comment type="interaction">
    <interactant intactId="EBI-11319000">
        <id>O15353</id>
    </interactant>
    <interactant intactId="EBI-9250559">
        <id>P32320</id>
        <label>CDA</label>
    </interactant>
    <organismsDiffer>false</organismsDiffer>
    <experiments>3</experiments>
</comment>
<comment type="interaction">
    <interactant intactId="EBI-11319000">
        <id>O15353</id>
    </interactant>
    <interactant intactId="EBI-396137">
        <id>Q9UJX2</id>
        <label>CDC23</label>
    </interactant>
    <organismsDiffer>false</organismsDiffer>
    <experiments>3</experiments>
</comment>
<comment type="interaction">
    <interactant intactId="EBI-11319000">
        <id>O15353</id>
    </interactant>
    <interactant intactId="EBI-9679045">
        <id>Q9NQL9</id>
        <label>DMRT3</label>
    </interactant>
    <organismsDiffer>false</organismsDiffer>
    <experiments>3</experiments>
</comment>
<comment type="interaction">
    <interactant intactId="EBI-11319000">
        <id>O15353</id>
    </interactant>
    <interactant intactId="EBI-740785">
        <id>P49639</id>
        <label>HOXA1</label>
    </interactant>
    <organismsDiffer>false</organismsDiffer>
    <experiments>3</experiments>
</comment>
<comment type="interaction">
    <interactant intactId="EBI-11319000">
        <id>O15353</id>
    </interactant>
    <interactant intactId="EBI-8474075">
        <id>Q68G74</id>
        <label>LHX8</label>
    </interactant>
    <organismsDiffer>false</organismsDiffer>
    <experiments>3</experiments>
</comment>
<comment type="interaction">
    <interactant intactId="EBI-11319000">
        <id>O15353</id>
    </interactant>
    <interactant intactId="EBI-947402">
        <id>O60336</id>
        <label>MAPKBP1</label>
    </interactant>
    <organismsDiffer>false</organismsDiffer>
    <experiments>3</experiments>
</comment>
<comment type="interaction">
    <interactant intactId="EBI-11319000">
        <id>O15353</id>
    </interactant>
    <interactant intactId="EBI-714158">
        <id>Q13526</id>
        <label>PIN1</label>
    </interactant>
    <organismsDiffer>false</organismsDiffer>
    <experiments>3</experiments>
</comment>
<comment type="interaction">
    <interactant intactId="EBI-11319000">
        <id>O15353</id>
    </interactant>
    <interactant intactId="EBI-11995806">
        <id>Q9H0A9-2</id>
        <label>SPATC1L</label>
    </interactant>
    <organismsDiffer>false</organismsDiffer>
    <experiments>3</experiments>
</comment>
<comment type="interaction">
    <interactant intactId="EBI-11319000">
        <id>O15353</id>
    </interactant>
    <interactant intactId="EBI-11741437">
        <id>Q08117-2</id>
        <label>TLE5</label>
    </interactant>
    <organismsDiffer>false</organismsDiffer>
    <experiments>3</experiments>
</comment>
<comment type="interaction">
    <interactant intactId="EBI-11319000">
        <id>O15353</id>
    </interactant>
    <interactant intactId="EBI-355744">
        <id>Q12933</id>
        <label>TRAF2</label>
    </interactant>
    <organismsDiffer>false</organismsDiffer>
    <experiments>3</experiments>
</comment>
<comment type="interaction">
    <interactant intactId="EBI-11319000">
        <id>O15353</id>
    </interactant>
    <interactant intactId="EBI-8451480">
        <id>O75865-2</id>
        <label>TRAPPC6A</label>
    </interactant>
    <organismsDiffer>false</organismsDiffer>
    <experiments>3</experiments>
</comment>
<comment type="interaction">
    <interactant intactId="EBI-11319000">
        <id>O15353</id>
    </interactant>
    <interactant intactId="EBI-6423734">
        <id>Q9BXA7</id>
        <label>TSSK1B</label>
    </interactant>
    <organismsDiffer>false</organismsDiffer>
    <experiments>4</experiments>
</comment>
<comment type="subcellular location">
    <subcellularLocation>
        <location>Nucleus</location>
    </subcellularLocation>
</comment>
<comment type="tissue specificity">
    <text>Expressed in thymus.</text>
</comment>
<comment type="disease" evidence="4 5 6 7 8 10">
    <disease id="DI-02357">
        <name>T-cell immunodeficiency, congenital alopecia, and nail dystrophy</name>
        <acronym>TIDAND</acronym>
        <description>A disorder characterized by the association of congenital alopecia, severe T-cell immunodeficiency, and ridging and pitting of all nails.</description>
        <dbReference type="MIM" id="601705"/>
    </disease>
    <text>The disease is caused by variants affecting the gene represented in this entry.</text>
</comment>
<comment type="disease" evidence="9">
    <disease id="DI-05787">
        <name>T-cell lymphopenia, infantile, with or without nail dystrophy, autosomal dominant</name>
        <acronym>TLIND</acronym>
        <description>An autosomal dominant disorder characterized by decreased numbers of T cells, particularly cytotoxic CD8+ T cells, and increased susceptibility to recurrent infections, mainly respiratory viral infections. Additional features may include impaired thymic development, skin abnormalities, such as atopic dermatitis, and nail dystrophy.</description>
        <dbReference type="MIM" id="618806"/>
    </disease>
    <text>The disease is caused by variants affecting the gene represented in this entry.</text>
</comment>
<comment type="disease" evidence="10">
    <disease id="DI-05795">
        <name>T-cell immunodeficiency with thymic aplasia</name>
        <acronym>TIDTA</acronym>
        <description>An autosomal recessive disorder characterized by selective hypo- or aplasia of the thymus, T-cell immunodeficiency due to impaired T-cell development, and increased susceptibility to viral infections.</description>
        <dbReference type="MIM" id="242700"/>
    </disease>
    <text>The disease is caused by variants affecting the gene represented in this entry.</text>
</comment>
<comment type="online information" name="FOXN1base">
    <link uri="https://databases.lovd.nl/shared/genes/FOXN1"/>
    <text>FOXN1 mutation db</text>
</comment>
<gene>
    <name type="primary">FOXN1</name>
    <name type="synonym">RONU</name>
    <name type="synonym">WHN</name>
</gene>
<name>FOXN1_HUMAN</name>
<sequence length="648" mass="68925">MVSLPPPQSDVTLPGPTRLEGERQGDLMQAPGLPGSPAPQSKHAGFSCSSFVSDGPPERTPSLPPHSPRIASPGPEQVQGHCPAGPGPGPFRLSPSDKYPGFGFEEAAASSPGRFLKGSHAPFHPYKRPFHEDVFPEAETTLALKGHSFKTPGPLEAFEEIPVDVAEAEAFLPGFSAEAWCNGLPYPSQEHGPQVLGSEVKVKPPVLESGAGMFCYQPPLQHMYCSSQPPFHQYSPGGGSYPIPYLGSSHYQYQRMAPQASTDGHQPLFPKPIYSYSILIFMALKNSKTGSLPVSEIYNFMTEHFPYFKTAPDGWKNSVRHNLSLNKCFEKVENKSGSSSRKGCLWALNPAKIDKMQEELQKWKRKDPIAVRKSMAKPEELDSLIGDKREKLGSPLLGCPPPGLSGSGPIRPLAPPAGLSPPLHSLHPAPGPIPGKNPLQDLLMGHTPSCYGQTYLHLSPGLAPPGPPQPLFPQPDGHLELRAQPGTPQDSPLPAHTPPSHSAKLLAEPSPARTMHDTLLPDGDLGTDLDAINPSLTDFDFQGNLWEQLKDDSLALDPLVLVTSSPTSSSMPPPQPPPHCFPPGPCLTETGSGAGDLAAPGSGGSGALGDLHLTTLYSAFMELEPTPPTAPAGPSVYLSPSSKPVALA</sequence>
<evidence type="ECO:0000250" key="1">
    <source>
        <dbReference type="UniProtKB" id="Q61575"/>
    </source>
</evidence>
<evidence type="ECO:0000255" key="2">
    <source>
        <dbReference type="PROSITE-ProRule" id="PRU00089"/>
    </source>
</evidence>
<evidence type="ECO:0000256" key="3">
    <source>
        <dbReference type="SAM" id="MobiDB-lite"/>
    </source>
</evidence>
<evidence type="ECO:0000269" key="4">
    <source>
    </source>
</evidence>
<evidence type="ECO:0000269" key="5">
    <source>
    </source>
</evidence>
<evidence type="ECO:0000269" key="6">
    <source>
    </source>
</evidence>
<evidence type="ECO:0000269" key="7">
    <source>
    </source>
</evidence>
<evidence type="ECO:0000269" key="8">
    <source>
    </source>
</evidence>
<evidence type="ECO:0000269" key="9">
    <source>
    </source>
</evidence>
<evidence type="ECO:0000269" key="10">
    <source>
    </source>
</evidence>
<evidence type="ECO:0000269" key="11">
    <source>
    </source>
</evidence>
<evidence type="ECO:0007829" key="12">
    <source>
        <dbReference type="PDB" id="6EL8"/>
    </source>
</evidence>
<keyword id="KW-0002">3D-structure</keyword>
<keyword id="KW-0217">Developmental protein</keyword>
<keyword id="KW-0221">Differentiation</keyword>
<keyword id="KW-0225">Disease variant</keyword>
<keyword id="KW-0238">DNA-binding</keyword>
<keyword id="KW-1063">Hypotrichosis</keyword>
<keyword id="KW-0539">Nucleus</keyword>
<keyword id="KW-1267">Proteomics identification</keyword>
<keyword id="KW-1185">Reference proteome</keyword>
<keyword id="KW-0804">Transcription</keyword>
<keyword id="KW-0805">Transcription regulation</keyword>
<protein>
    <recommendedName>
        <fullName>Forkhead box protein N1</fullName>
    </recommendedName>
    <alternativeName>
        <fullName>Winged-helix transcription factor nude</fullName>
    </alternativeName>
</protein>
<organism>
    <name type="scientific">Homo sapiens</name>
    <name type="common">Human</name>
    <dbReference type="NCBI Taxonomy" id="9606"/>
    <lineage>
        <taxon>Eukaryota</taxon>
        <taxon>Metazoa</taxon>
        <taxon>Chordata</taxon>
        <taxon>Craniata</taxon>
        <taxon>Vertebrata</taxon>
        <taxon>Euteleostomi</taxon>
        <taxon>Mammalia</taxon>
        <taxon>Eutheria</taxon>
        <taxon>Euarchontoglires</taxon>
        <taxon>Primates</taxon>
        <taxon>Haplorrhini</taxon>
        <taxon>Catarrhini</taxon>
        <taxon>Hominidae</taxon>
        <taxon>Homo</taxon>
    </lineage>
</organism>
<feature type="chain" id="PRO_0000091866" description="Forkhead box protein N1">
    <location>
        <begin position="1"/>
        <end position="648"/>
    </location>
</feature>
<feature type="DNA-binding region" description="Fork-head" evidence="2">
    <location>
        <begin position="271"/>
        <end position="367"/>
    </location>
</feature>
<feature type="region of interest" description="Disordered" evidence="3">
    <location>
        <begin position="1"/>
        <end position="105"/>
    </location>
</feature>
<feature type="region of interest" description="Disordered" evidence="3">
    <location>
        <begin position="392"/>
        <end position="445"/>
    </location>
</feature>
<feature type="region of interest" description="Disordered" evidence="3">
    <location>
        <begin position="458"/>
        <end position="508"/>
    </location>
</feature>
<feature type="region of interest" description="Disordered" evidence="3">
    <location>
        <begin position="623"/>
        <end position="648"/>
    </location>
</feature>
<feature type="compositionally biased region" description="Pro residues" evidence="3">
    <location>
        <begin position="58"/>
        <end position="67"/>
    </location>
</feature>
<feature type="compositionally biased region" description="Pro residues" evidence="3">
    <location>
        <begin position="462"/>
        <end position="473"/>
    </location>
</feature>
<feature type="sequence variant" id="VAR_020025" description="In dbSNP:rs2071587.">
    <original>R</original>
    <variation>C</variation>
    <location>
        <position position="69"/>
    </location>
</feature>
<feature type="sequence variant" id="VAR_083857" description="In TLIND; uncertain significance." evidence="9">
    <original>E</original>
    <variation>K</variation>
    <location>
        <position position="169"/>
    </location>
</feature>
<feature type="sequence variant" id="VAR_083858" description="Does not affect transcriptional activity as shown by a transcriptional reporter assay; dbSNP:rs140921495." evidence="10">
    <original>P</original>
    <variation>S</variation>
    <location>
        <position position="242"/>
    </location>
</feature>
<feature type="sequence variant" id="VAR_083859" description="In TIDAND and TLIND." evidence="4 5 6 8 9">
    <location>
        <begin position="255"/>
        <end position="648"/>
    </location>
</feature>
<feature type="sequence variant" id="VAR_010376" evidence="11">
    <original>A</original>
    <variation>V</variation>
    <location>
        <position position="283"/>
    </location>
</feature>
<feature type="sequence variant" id="VAR_083860" description="In TIDAND and TLIND; severely reduced transcriptional activity as shown by a transcriptional reporter assay; dbSNP:rs1288977950." evidence="5 9 10">
    <original>R</original>
    <variation>W</variation>
    <location>
        <position position="320"/>
    </location>
</feature>
<feature type="sequence variant" id="VAR_083861" description="In TLIND; uncertain significance." evidence="9">
    <original>H</original>
    <variation>N</variation>
    <location>
        <position position="321"/>
    </location>
</feature>
<feature type="sequence variant" id="VAR_083862" description="In TLIND; uncertain significance." evidence="9">
    <original>L</original>
    <variation>P</variation>
    <location>
        <position position="325"/>
    </location>
</feature>
<feature type="sequence variant" id="VAR_083863" description="In TIDTA; decreased transcriptional activity as shown by a transcriptional reporter assay." evidence="10">
    <original>WKRKDP</original>
    <variation>C</variation>
    <location>
        <begin position="363"/>
        <end position="368"/>
    </location>
</feature>
<feature type="sequence variant" id="VAR_021843" description="In dbSNP:rs2286520.">
    <original>R</original>
    <variation>W</variation>
    <location>
        <position position="411"/>
    </location>
</feature>
<feature type="sequence variant" id="VAR_083864" description="Does not affect transcriptional activity as shown by a transcriptional reporter assay; dbSNP:rs61749867." evidence="10">
    <original>P</original>
    <variation>S</variation>
    <location>
        <position position="430"/>
    </location>
</feature>
<feature type="sequence variant" id="VAR_083865" description="In TLIND." evidence="9">
    <location>
        <begin position="474"/>
        <end position="648"/>
    </location>
</feature>
<feature type="sequence variant" id="VAR_020026" description="In dbSNP:rs532648.">
    <original>A</original>
    <variation>P</variation>
    <location>
        <position position="599"/>
    </location>
</feature>
<feature type="helix" evidence="12">
    <location>
        <begin position="276"/>
        <end position="285"/>
    </location>
</feature>
<feature type="strand" evidence="12">
    <location>
        <begin position="287"/>
        <end position="293"/>
    </location>
</feature>
<feature type="helix" evidence="12">
    <location>
        <begin position="294"/>
        <end position="304"/>
    </location>
</feature>
<feature type="helix" evidence="12">
    <location>
        <begin position="307"/>
        <end position="310"/>
    </location>
</feature>
<feature type="helix" evidence="12">
    <location>
        <begin position="315"/>
        <end position="325"/>
    </location>
</feature>
<feature type="strand" evidence="12">
    <location>
        <begin position="329"/>
        <end position="332"/>
    </location>
</feature>
<feature type="strand" evidence="12">
    <location>
        <begin position="345"/>
        <end position="348"/>
    </location>
</feature>
<feature type="helix" evidence="12">
    <location>
        <begin position="350"/>
        <end position="352"/>
    </location>
</feature>
<feature type="helix" evidence="12">
    <location>
        <begin position="353"/>
        <end position="360"/>
    </location>
</feature>
<proteinExistence type="evidence at protein level"/>
<accession>O15353</accession>
<accession>B2R9Q7</accession>
<accession>O15352</accession>
<reference key="1">
    <citation type="journal article" date="1997" name="Immunogenetics">
        <title>Characterization of mouse and human nude genes.</title>
        <authorList>
            <person name="Schorpp M."/>
            <person name="Hofmann M."/>
            <person name="Dear T.N."/>
            <person name="Boehm T."/>
        </authorList>
    </citation>
    <scope>NUCLEOTIDE SEQUENCE [GENOMIC DNA / MRNA]</scope>
    <scope>VARIANT VAL-283</scope>
    <source>
        <tissue>Thymus</tissue>
    </source>
</reference>
<reference key="2">
    <citation type="journal article" date="2004" name="Nat. Genet.">
        <title>Complete sequencing and characterization of 21,243 full-length human cDNAs.</title>
        <authorList>
            <person name="Ota T."/>
            <person name="Suzuki Y."/>
            <person name="Nishikawa T."/>
            <person name="Otsuki T."/>
            <person name="Sugiyama T."/>
            <person name="Irie R."/>
            <person name="Wakamatsu A."/>
            <person name="Hayashi K."/>
            <person name="Sato H."/>
            <person name="Nagai K."/>
            <person name="Kimura K."/>
            <person name="Makita H."/>
            <person name="Sekine M."/>
            <person name="Obayashi M."/>
            <person name="Nishi T."/>
            <person name="Shibahara T."/>
            <person name="Tanaka T."/>
            <person name="Ishii S."/>
            <person name="Yamamoto J."/>
            <person name="Saito K."/>
            <person name="Kawai Y."/>
            <person name="Isono Y."/>
            <person name="Nakamura Y."/>
            <person name="Nagahari K."/>
            <person name="Murakami K."/>
            <person name="Yasuda T."/>
            <person name="Iwayanagi T."/>
            <person name="Wagatsuma M."/>
            <person name="Shiratori A."/>
            <person name="Sudo H."/>
            <person name="Hosoiri T."/>
            <person name="Kaku Y."/>
            <person name="Kodaira H."/>
            <person name="Kondo H."/>
            <person name="Sugawara M."/>
            <person name="Takahashi M."/>
            <person name="Kanda K."/>
            <person name="Yokoi T."/>
            <person name="Furuya T."/>
            <person name="Kikkawa E."/>
            <person name="Omura Y."/>
            <person name="Abe K."/>
            <person name="Kamihara K."/>
            <person name="Katsuta N."/>
            <person name="Sato K."/>
            <person name="Tanikawa M."/>
            <person name="Yamazaki M."/>
            <person name="Ninomiya K."/>
            <person name="Ishibashi T."/>
            <person name="Yamashita H."/>
            <person name="Murakawa K."/>
            <person name="Fujimori K."/>
            <person name="Tanai H."/>
            <person name="Kimata M."/>
            <person name="Watanabe M."/>
            <person name="Hiraoka S."/>
            <person name="Chiba Y."/>
            <person name="Ishida S."/>
            <person name="Ono Y."/>
            <person name="Takiguchi S."/>
            <person name="Watanabe S."/>
            <person name="Yosida M."/>
            <person name="Hotuta T."/>
            <person name="Kusano J."/>
            <person name="Kanehori K."/>
            <person name="Takahashi-Fujii A."/>
            <person name="Hara H."/>
            <person name="Tanase T.-O."/>
            <person name="Nomura Y."/>
            <person name="Togiya S."/>
            <person name="Komai F."/>
            <person name="Hara R."/>
            <person name="Takeuchi K."/>
            <person name="Arita M."/>
            <person name="Imose N."/>
            <person name="Musashino K."/>
            <person name="Yuuki H."/>
            <person name="Oshima A."/>
            <person name="Sasaki N."/>
            <person name="Aotsuka S."/>
            <person name="Yoshikawa Y."/>
            <person name="Matsunawa H."/>
            <person name="Ichihara T."/>
            <person name="Shiohata N."/>
            <person name="Sano S."/>
            <person name="Moriya S."/>
            <person name="Momiyama H."/>
            <person name="Satoh N."/>
            <person name="Takami S."/>
            <person name="Terashima Y."/>
            <person name="Suzuki O."/>
            <person name="Nakagawa S."/>
            <person name="Senoh A."/>
            <person name="Mizoguchi H."/>
            <person name="Goto Y."/>
            <person name="Shimizu F."/>
            <person name="Wakebe H."/>
            <person name="Hishigaki H."/>
            <person name="Watanabe T."/>
            <person name="Sugiyama A."/>
            <person name="Takemoto M."/>
            <person name="Kawakami B."/>
            <person name="Yamazaki M."/>
            <person name="Watanabe K."/>
            <person name="Kumagai A."/>
            <person name="Itakura S."/>
            <person name="Fukuzumi Y."/>
            <person name="Fujimori Y."/>
            <person name="Komiyama M."/>
            <person name="Tashiro H."/>
            <person name="Tanigami A."/>
            <person name="Fujiwara T."/>
            <person name="Ono T."/>
            <person name="Yamada K."/>
            <person name="Fujii Y."/>
            <person name="Ozaki K."/>
            <person name="Hirao M."/>
            <person name="Ohmori Y."/>
            <person name="Kawabata A."/>
            <person name="Hikiji T."/>
            <person name="Kobatake N."/>
            <person name="Inagaki H."/>
            <person name="Ikema Y."/>
            <person name="Okamoto S."/>
            <person name="Okitani R."/>
            <person name="Kawakami T."/>
            <person name="Noguchi S."/>
            <person name="Itoh T."/>
            <person name="Shigeta K."/>
            <person name="Senba T."/>
            <person name="Matsumura K."/>
            <person name="Nakajima Y."/>
            <person name="Mizuno T."/>
            <person name="Morinaga M."/>
            <person name="Sasaki M."/>
            <person name="Togashi T."/>
            <person name="Oyama M."/>
            <person name="Hata H."/>
            <person name="Watanabe M."/>
            <person name="Komatsu T."/>
            <person name="Mizushima-Sugano J."/>
            <person name="Satoh T."/>
            <person name="Shirai Y."/>
            <person name="Takahashi Y."/>
            <person name="Nakagawa K."/>
            <person name="Okumura K."/>
            <person name="Nagase T."/>
            <person name="Nomura N."/>
            <person name="Kikuchi H."/>
            <person name="Masuho Y."/>
            <person name="Yamashita R."/>
            <person name="Nakai K."/>
            <person name="Yada T."/>
            <person name="Nakamura Y."/>
            <person name="Ohara O."/>
            <person name="Isogai T."/>
            <person name="Sugano S."/>
        </authorList>
    </citation>
    <scope>NUCLEOTIDE SEQUENCE [LARGE SCALE MRNA]</scope>
    <source>
        <tissue>Thymus</tissue>
    </source>
</reference>
<reference key="3">
    <citation type="submission" date="2005-07" db="EMBL/GenBank/DDBJ databases">
        <authorList>
            <person name="Mural R.J."/>
            <person name="Istrail S."/>
            <person name="Sutton G.G."/>
            <person name="Florea L."/>
            <person name="Halpern A.L."/>
            <person name="Mobarry C.M."/>
            <person name="Lippert R."/>
            <person name="Walenz B."/>
            <person name="Shatkay H."/>
            <person name="Dew I."/>
            <person name="Miller J.R."/>
            <person name="Flanigan M.J."/>
            <person name="Edwards N.J."/>
            <person name="Bolanos R."/>
            <person name="Fasulo D."/>
            <person name="Halldorsson B.V."/>
            <person name="Hannenhalli S."/>
            <person name="Turner R."/>
            <person name="Yooseph S."/>
            <person name="Lu F."/>
            <person name="Nusskern D.R."/>
            <person name="Shue B.C."/>
            <person name="Zheng X.H."/>
            <person name="Zhong F."/>
            <person name="Delcher A.L."/>
            <person name="Huson D.H."/>
            <person name="Kravitz S.A."/>
            <person name="Mouchard L."/>
            <person name="Reinert K."/>
            <person name="Remington K.A."/>
            <person name="Clark A.G."/>
            <person name="Waterman M.S."/>
            <person name="Eichler E.E."/>
            <person name="Adams M.D."/>
            <person name="Hunkapiller M.W."/>
            <person name="Myers E.W."/>
            <person name="Venter J.C."/>
        </authorList>
    </citation>
    <scope>NUCLEOTIDE SEQUENCE [LARGE SCALE GENOMIC DNA]</scope>
</reference>
<reference key="4">
    <citation type="journal article" date="1999" name="Nature">
        <title>Exposing the human nude phenotype.</title>
        <authorList>
            <person name="Frank J."/>
            <person name="Pignata C."/>
            <person name="Panteleyev A.A."/>
            <person name="Prowse D.M."/>
            <person name="Baden H."/>
            <person name="Weiner L."/>
            <person name="Gaetaniello L."/>
            <person name="Ahmad W."/>
            <person name="Pozzi N."/>
            <person name="Cserhalmi-Friedman P.B."/>
            <person name="Aita V.M."/>
            <person name="Uyttendaele H."/>
            <person name="Gordon D."/>
            <person name="Ott J."/>
            <person name="Brissette J.L."/>
            <person name="Christiano A.M."/>
        </authorList>
    </citation>
    <scope>INVOLVEMENT IN TIDAND</scope>
    <scope>VARIANT TIDAND 255-ARG--ALA-648 DEL</scope>
</reference>
<reference key="5">
    <citation type="journal article" date="2011" name="J. Med. Genet.">
        <title>FOXN1 mutation abrogates prenatal T-cell development in humans.</title>
        <authorList>
            <person name="Vigliano I."/>
            <person name="Gorrese M."/>
            <person name="Fusco A."/>
            <person name="Vitiello L."/>
            <person name="Amorosi S."/>
            <person name="Panico L."/>
            <person name="Ursini M.V."/>
            <person name="Calcagno G."/>
            <person name="Racioppi L."/>
            <person name="Del Vecchio L."/>
            <person name="Pignata C."/>
        </authorList>
    </citation>
    <scope>FUNCTION</scope>
    <scope>INVOLVEMENT IN TIDAND</scope>
    <scope>VARIANT TIDAND 255-ARG--ALA-648 DEL</scope>
</reference>
<reference key="6">
    <citation type="journal article" date="2014" name="Clin. Immunol.">
        <title>A novel mutation in FOXN1 resulting in SCID: a case report and literature review.</title>
        <authorList>
            <person name="Chou J."/>
            <person name="Massaad M.J."/>
            <person name="Wakim R.H."/>
            <person name="Bainter W."/>
            <person name="Dbaibo G."/>
            <person name="Geha R.S."/>
        </authorList>
    </citation>
    <scope>INVOLVEMENT IN TIDAND</scope>
</reference>
<reference key="7">
    <citation type="journal article" date="2013" name="Front. Immunol.">
        <title>FOXN1: a master regulator gene of thymic epithelial development program.</title>
        <authorList>
            <person name="Romano R."/>
            <person name="Palamaro L."/>
            <person name="Fusco A."/>
            <person name="Giardino G."/>
            <person name="Gallo V."/>
            <person name="Del Vecchio L."/>
            <person name="Pignata C."/>
        </authorList>
    </citation>
    <scope>REVIEW</scope>
</reference>
<reference key="8">
    <citation type="journal article" date="2014" name="Int. Rev. Immunol.">
        <title>FOXN1 in organ development and human diseases.</title>
        <authorList>
            <person name="Palamaro L."/>
            <person name="Romano R."/>
            <person name="Fusco A."/>
            <person name="Giardino G."/>
            <person name="Gallo V."/>
            <person name="Pignata C."/>
        </authorList>
    </citation>
    <scope>REVIEW</scope>
</reference>
<reference key="9">
    <citation type="journal article" date="2011" name="Blood">
        <title>First use of thymus transplantation therapy for FOXN1 deficiency (nude/SCID): a report of 2 cases.</title>
        <authorList>
            <person name="Markert M.L."/>
            <person name="Marques J.G."/>
            <person name="Neven B."/>
            <person name="Devlin B.H."/>
            <person name="McCarthy E.A."/>
            <person name="Chinn I.K."/>
            <person name="Albuquerque A.S."/>
            <person name="Silva S.L."/>
            <person name="Pignata C."/>
            <person name="de Saint Basile G."/>
            <person name="Victorino R.M."/>
            <person name="Picard C."/>
            <person name="Debre M."/>
            <person name="Mahlaoui N."/>
            <person name="Fischer A."/>
            <person name="Sousa A.E."/>
        </authorList>
    </citation>
    <scope>VARIANTS TIDAND 255-ARG--ALA-648 DEL AND TRP-320</scope>
</reference>
<reference key="10">
    <citation type="journal article" date="2017" name="Gene">
        <title>FOXN1 Italian founder mutation in Indian family: Implications in prenatal diagnosis.</title>
        <authorList>
            <person name="Radha Rama Devi A."/>
            <person name="Panday N.N."/>
            <person name="Naushad S.M."/>
        </authorList>
    </citation>
    <scope>VARIANT TIDAND 255-ARG--ALA-648 DEL</scope>
</reference>
<reference key="11">
    <citation type="journal article" date="2019" name="Am. J. Hum. Genet.">
        <title>Heterozygous FOXN1 variants cause low TRECs and severe T cell lymphopenia, revealing a crucial role of FOXN1 in supporting early thymopoiesis.</title>
        <authorList>
            <person name="Bosticardo M."/>
            <person name="Yamazaki Y."/>
            <person name="Cowan J."/>
            <person name="Giardino G."/>
            <person name="Corsino C."/>
            <person name="Scalia G."/>
            <person name="Prencipe R."/>
            <person name="Ruffner M."/>
            <person name="Hill D.A."/>
            <person name="Sakovich I."/>
            <person name="Yemialyanava I."/>
            <person name="Tam J.S."/>
            <person name="Padem N."/>
            <person name="Elder M.E."/>
            <person name="Sleasman J.W."/>
            <person name="Perez E."/>
            <person name="Niebur H."/>
            <person name="Seroogy C.M."/>
            <person name="Sharapova S."/>
            <person name="Gebbia J."/>
            <person name="Kleiner G.I."/>
            <person name="Peake J."/>
            <person name="Abbott J.K."/>
            <person name="Gelfand E.W."/>
            <person name="Crestani E."/>
            <person name="Biggs C."/>
            <person name="Butte M.J."/>
            <person name="Hartog N."/>
            <person name="Hayward A."/>
            <person name="Chen K."/>
            <person name="Heimall J."/>
            <person name="Seeborg F."/>
            <person name="Bartnikas L.M."/>
            <person name="Cooper M.A."/>
            <person name="Pignata C."/>
            <person name="Bhandoola A."/>
            <person name="Notarangelo L.D."/>
        </authorList>
    </citation>
    <scope>VARIANTS TLIND LYS-169; 255-ARG--ALA-648 DEL; TRP-320; ASN-321; PRO-325 AND 474-GLN--ALA-648 DEL</scope>
    <scope>INVOLVEMENT IN TLIND</scope>
</reference>
<reference key="12">
    <citation type="journal article" date="2019" name="J. Clin. Invest.">
        <title>FOXN1 compound heterozygous mutations cause selective thymic hypoplasia in humans.</title>
        <authorList>
            <person name="Du Q."/>
            <person name="Huynh L.K."/>
            <person name="Coskun F."/>
            <person name="Molina E."/>
            <person name="King M.A."/>
            <person name="Raj P."/>
            <person name="Khan S."/>
            <person name="Dozmorov I."/>
            <person name="Seroogy C.M."/>
            <person name="Wysocki C.A."/>
            <person name="Padron G.T."/>
            <person name="Yates T.R."/>
            <person name="Markert M.L."/>
            <person name="de la Morena M.T."/>
            <person name="van Oers N.S."/>
        </authorList>
    </citation>
    <scope>VARIANT TIDTA 363-TRP--PRO-368 DELINS CYS</scope>
    <scope>INVOLVEMENT IN TIDTA</scope>
    <scope>VARIANTS SER-242 AND SER-430</scope>
    <scope>CHARACTERIZATION OF VARIANT TIDTA 363-TRP--PRO-368 DELINS CYS</scope>
    <scope>CHARACTERIZATION OF VARIANTS SER-242 AND SER-430</scope>
    <scope>CHARACTERIZATION OF VARIANT TIDAND TRP-320</scope>
</reference>